<proteinExistence type="inferred from homology"/>
<keyword id="KW-0067">ATP-binding</keyword>
<keyword id="KW-0963">Cytoplasm</keyword>
<keyword id="KW-0324">Glycolysis</keyword>
<keyword id="KW-0418">Kinase</keyword>
<keyword id="KW-0547">Nucleotide-binding</keyword>
<keyword id="KW-1185">Reference proteome</keyword>
<keyword id="KW-0808">Transferase</keyword>
<organism>
    <name type="scientific">Novosphingobium aromaticivorans (strain ATCC 700278 / DSM 12444 / CCUG 56034 / CIP 105152 / NBRC 16084 / F199)</name>
    <dbReference type="NCBI Taxonomy" id="279238"/>
    <lineage>
        <taxon>Bacteria</taxon>
        <taxon>Pseudomonadati</taxon>
        <taxon>Pseudomonadota</taxon>
        <taxon>Alphaproteobacteria</taxon>
        <taxon>Sphingomonadales</taxon>
        <taxon>Sphingomonadaceae</taxon>
        <taxon>Novosphingobium</taxon>
    </lineage>
</organism>
<sequence>MSFKTLDDIGDLTGKTVLVREDLNVPMQDGAVTDDTRLRATIATLNELSDKGAKVLVLAHFGRPKGQPSEEFSLKKLAAPLAHVLGRPVSYIDWESDKAAVAALTPGAIAVLENTRFFDGEEKNDPAVIERFASLGDIYVNDAFSAAHRAHASTEGLAHVLPAYAGRAMEAELKALQKALGEPERPVAAVVGGAKVSTKLDVLKHLVSKVDHLIIGGGMANTFLAARGVNVGKSLCEHDLTGTAEEILDNADKSGCTVHLPYDVVVSKEFTANPPSLRTCNVHEVAADEMILDVGPAAVEALADVLKTCKTLVWNGPMGAFETEPFDAATVALARTAAALTKEGSLVSVAGGGDTVAALNHAGVVGDFSYISTAGGAFLEWMEGKELPGVAALEG</sequence>
<dbReference type="EC" id="2.7.2.3" evidence="1"/>
<dbReference type="EMBL" id="CP000248">
    <property type="protein sequence ID" value="ABD26405.1"/>
    <property type="molecule type" value="Genomic_DNA"/>
</dbReference>
<dbReference type="RefSeq" id="WP_011445614.1">
    <property type="nucleotide sequence ID" value="NC_007794.1"/>
</dbReference>
<dbReference type="SMR" id="Q2G6W8"/>
<dbReference type="STRING" id="279238.Saro_1965"/>
<dbReference type="KEGG" id="nar:Saro_1965"/>
<dbReference type="eggNOG" id="COG0126">
    <property type="taxonomic scope" value="Bacteria"/>
</dbReference>
<dbReference type="HOGENOM" id="CLU_025427_0_2_5"/>
<dbReference type="UniPathway" id="UPA00109">
    <property type="reaction ID" value="UER00185"/>
</dbReference>
<dbReference type="Proteomes" id="UP000009134">
    <property type="component" value="Chromosome"/>
</dbReference>
<dbReference type="GO" id="GO:0005829">
    <property type="term" value="C:cytosol"/>
    <property type="evidence" value="ECO:0007669"/>
    <property type="project" value="TreeGrafter"/>
</dbReference>
<dbReference type="GO" id="GO:0043531">
    <property type="term" value="F:ADP binding"/>
    <property type="evidence" value="ECO:0007669"/>
    <property type="project" value="TreeGrafter"/>
</dbReference>
<dbReference type="GO" id="GO:0005524">
    <property type="term" value="F:ATP binding"/>
    <property type="evidence" value="ECO:0007669"/>
    <property type="project" value="UniProtKB-KW"/>
</dbReference>
<dbReference type="GO" id="GO:0004618">
    <property type="term" value="F:phosphoglycerate kinase activity"/>
    <property type="evidence" value="ECO:0007669"/>
    <property type="project" value="UniProtKB-UniRule"/>
</dbReference>
<dbReference type="GO" id="GO:0006094">
    <property type="term" value="P:gluconeogenesis"/>
    <property type="evidence" value="ECO:0007669"/>
    <property type="project" value="TreeGrafter"/>
</dbReference>
<dbReference type="GO" id="GO:0006096">
    <property type="term" value="P:glycolytic process"/>
    <property type="evidence" value="ECO:0007669"/>
    <property type="project" value="UniProtKB-UniRule"/>
</dbReference>
<dbReference type="FunFam" id="3.40.50.1260:FF:000006">
    <property type="entry name" value="Phosphoglycerate kinase"/>
    <property type="match status" value="1"/>
</dbReference>
<dbReference type="FunFam" id="3.40.50.1260:FF:000031">
    <property type="entry name" value="Phosphoglycerate kinase 1"/>
    <property type="match status" value="1"/>
</dbReference>
<dbReference type="Gene3D" id="3.40.50.1260">
    <property type="entry name" value="Phosphoglycerate kinase, N-terminal domain"/>
    <property type="match status" value="2"/>
</dbReference>
<dbReference type="HAMAP" id="MF_00145">
    <property type="entry name" value="Phosphoglyc_kinase"/>
    <property type="match status" value="1"/>
</dbReference>
<dbReference type="InterPro" id="IPR001576">
    <property type="entry name" value="Phosphoglycerate_kinase"/>
</dbReference>
<dbReference type="InterPro" id="IPR015911">
    <property type="entry name" value="Phosphoglycerate_kinase_CS"/>
</dbReference>
<dbReference type="InterPro" id="IPR015824">
    <property type="entry name" value="Phosphoglycerate_kinase_N"/>
</dbReference>
<dbReference type="InterPro" id="IPR036043">
    <property type="entry name" value="Phosphoglycerate_kinase_sf"/>
</dbReference>
<dbReference type="PANTHER" id="PTHR11406">
    <property type="entry name" value="PHOSPHOGLYCERATE KINASE"/>
    <property type="match status" value="1"/>
</dbReference>
<dbReference type="PANTHER" id="PTHR11406:SF23">
    <property type="entry name" value="PHOSPHOGLYCERATE KINASE 1, CHLOROPLASTIC-RELATED"/>
    <property type="match status" value="1"/>
</dbReference>
<dbReference type="Pfam" id="PF00162">
    <property type="entry name" value="PGK"/>
    <property type="match status" value="1"/>
</dbReference>
<dbReference type="PIRSF" id="PIRSF000724">
    <property type="entry name" value="Pgk"/>
    <property type="match status" value="1"/>
</dbReference>
<dbReference type="PRINTS" id="PR00477">
    <property type="entry name" value="PHGLYCKINASE"/>
</dbReference>
<dbReference type="SUPFAM" id="SSF53748">
    <property type="entry name" value="Phosphoglycerate kinase"/>
    <property type="match status" value="1"/>
</dbReference>
<dbReference type="PROSITE" id="PS00111">
    <property type="entry name" value="PGLYCERATE_KINASE"/>
    <property type="match status" value="1"/>
</dbReference>
<evidence type="ECO:0000255" key="1">
    <source>
        <dbReference type="HAMAP-Rule" id="MF_00145"/>
    </source>
</evidence>
<accession>Q2G6W8</accession>
<comment type="catalytic activity">
    <reaction evidence="1">
        <text>(2R)-3-phosphoglycerate + ATP = (2R)-3-phospho-glyceroyl phosphate + ADP</text>
        <dbReference type="Rhea" id="RHEA:14801"/>
        <dbReference type="ChEBI" id="CHEBI:30616"/>
        <dbReference type="ChEBI" id="CHEBI:57604"/>
        <dbReference type="ChEBI" id="CHEBI:58272"/>
        <dbReference type="ChEBI" id="CHEBI:456216"/>
        <dbReference type="EC" id="2.7.2.3"/>
    </reaction>
</comment>
<comment type="pathway">
    <text evidence="1">Carbohydrate degradation; glycolysis; pyruvate from D-glyceraldehyde 3-phosphate: step 2/5.</text>
</comment>
<comment type="subunit">
    <text evidence="1">Monomer.</text>
</comment>
<comment type="subcellular location">
    <subcellularLocation>
        <location evidence="1">Cytoplasm</location>
    </subcellularLocation>
</comment>
<comment type="similarity">
    <text evidence="1">Belongs to the phosphoglycerate kinase family.</text>
</comment>
<gene>
    <name evidence="1" type="primary">pgk</name>
    <name type="ordered locus">Saro_1965</name>
</gene>
<protein>
    <recommendedName>
        <fullName evidence="1">Phosphoglycerate kinase</fullName>
        <ecNumber evidence="1">2.7.2.3</ecNumber>
    </recommendedName>
</protein>
<reference key="1">
    <citation type="submission" date="2006-01" db="EMBL/GenBank/DDBJ databases">
        <title>Complete sequence of Novosphingobium aromaticivorans DSM 12444.</title>
        <authorList>
            <consortium name="US DOE Joint Genome Institute"/>
            <person name="Copeland A."/>
            <person name="Lucas S."/>
            <person name="Lapidus A."/>
            <person name="Barry K."/>
            <person name="Detter J.C."/>
            <person name="Glavina T."/>
            <person name="Hammon N."/>
            <person name="Israni S."/>
            <person name="Pitluck S."/>
            <person name="Chain P."/>
            <person name="Malfatti S."/>
            <person name="Shin M."/>
            <person name="Vergez L."/>
            <person name="Schmutz J."/>
            <person name="Larimer F."/>
            <person name="Land M."/>
            <person name="Kyrpides N."/>
            <person name="Ivanova N."/>
            <person name="Fredrickson J."/>
            <person name="Balkwill D."/>
            <person name="Romine M.F."/>
            <person name="Richardson P."/>
        </authorList>
    </citation>
    <scope>NUCLEOTIDE SEQUENCE [LARGE SCALE GENOMIC DNA]</scope>
    <source>
        <strain>ATCC 700278 / DSM 12444 / CCUG 56034 / CIP 105152 / NBRC 16084 / F199</strain>
    </source>
</reference>
<name>PGK_NOVAD</name>
<feature type="chain" id="PRO_1000058023" description="Phosphoglycerate kinase">
    <location>
        <begin position="1"/>
        <end position="395"/>
    </location>
</feature>
<feature type="binding site" evidence="1">
    <location>
        <begin position="22"/>
        <end position="24"/>
    </location>
    <ligand>
        <name>substrate</name>
    </ligand>
</feature>
<feature type="binding site" evidence="1">
    <location>
        <position position="37"/>
    </location>
    <ligand>
        <name>substrate</name>
    </ligand>
</feature>
<feature type="binding site" evidence="1">
    <location>
        <begin position="60"/>
        <end position="63"/>
    </location>
    <ligand>
        <name>substrate</name>
    </ligand>
</feature>
<feature type="binding site" evidence="1">
    <location>
        <position position="116"/>
    </location>
    <ligand>
        <name>substrate</name>
    </ligand>
</feature>
<feature type="binding site" evidence="1">
    <location>
        <position position="149"/>
    </location>
    <ligand>
        <name>substrate</name>
    </ligand>
</feature>
<feature type="binding site" evidence="1">
    <location>
        <position position="199"/>
    </location>
    <ligand>
        <name>ATP</name>
        <dbReference type="ChEBI" id="CHEBI:30616"/>
    </ligand>
</feature>
<feature type="binding site" evidence="1">
    <location>
        <position position="322"/>
    </location>
    <ligand>
        <name>ATP</name>
        <dbReference type="ChEBI" id="CHEBI:30616"/>
    </ligand>
</feature>
<feature type="binding site" evidence="1">
    <location>
        <begin position="352"/>
        <end position="355"/>
    </location>
    <ligand>
        <name>ATP</name>
        <dbReference type="ChEBI" id="CHEBI:30616"/>
    </ligand>
</feature>